<sequence>MARYEDLPYRTCVGMMLINRAGLVFIGRRAGGIEHVDDTHVWQMPQGGVDPGEDTWEAAKRELYEETNVRSVEKIAEVPDWLIYDIPRTVAGRAWKGRYRGQRQKWFAIRFTGQDSEIDIIAPPGHKSEFTSWRWEPMLNLPDLIVPFKRPVYERVVKEFSQLAIAV</sequence>
<proteinExistence type="inferred from homology"/>
<reference key="1">
    <citation type="submission" date="2006-01" db="EMBL/GenBank/DDBJ databases">
        <title>Complete sequence of Rhodopseudomonas palustris HaA2.</title>
        <authorList>
            <consortium name="US DOE Joint Genome Institute"/>
            <person name="Copeland A."/>
            <person name="Lucas S."/>
            <person name="Lapidus A."/>
            <person name="Barry K."/>
            <person name="Detter J.C."/>
            <person name="Glavina T."/>
            <person name="Hammon N."/>
            <person name="Israni S."/>
            <person name="Pitluck S."/>
            <person name="Chain P."/>
            <person name="Malfatti S."/>
            <person name="Shin M."/>
            <person name="Vergez L."/>
            <person name="Schmutz J."/>
            <person name="Larimer F."/>
            <person name="Land M."/>
            <person name="Hauser L."/>
            <person name="Pelletier D.A."/>
            <person name="Kyrpides N."/>
            <person name="Anderson I."/>
            <person name="Oda Y."/>
            <person name="Harwood C.S."/>
            <person name="Richardson P."/>
        </authorList>
    </citation>
    <scope>NUCLEOTIDE SEQUENCE [LARGE SCALE GENOMIC DNA]</scope>
    <source>
        <strain>HaA2</strain>
    </source>
</reference>
<evidence type="ECO:0000255" key="1">
    <source>
        <dbReference type="HAMAP-Rule" id="MF_00298"/>
    </source>
</evidence>
<protein>
    <recommendedName>
        <fullName evidence="1">RNA pyrophosphohydrolase</fullName>
        <ecNumber evidence="1">3.6.1.-</ecNumber>
    </recommendedName>
    <alternativeName>
        <fullName evidence="1">(Di)nucleoside polyphosphate hydrolase</fullName>
    </alternativeName>
</protein>
<accession>Q2J3I9</accession>
<dbReference type="EC" id="3.6.1.-" evidence="1"/>
<dbReference type="EMBL" id="CP000250">
    <property type="protein sequence ID" value="ABD04971.1"/>
    <property type="molecule type" value="Genomic_DNA"/>
</dbReference>
<dbReference type="RefSeq" id="WP_011439161.1">
    <property type="nucleotide sequence ID" value="NC_007778.1"/>
</dbReference>
<dbReference type="SMR" id="Q2J3I9"/>
<dbReference type="STRING" id="316058.RPB_0260"/>
<dbReference type="KEGG" id="rpb:RPB_0260"/>
<dbReference type="eggNOG" id="COG0494">
    <property type="taxonomic scope" value="Bacteria"/>
</dbReference>
<dbReference type="HOGENOM" id="CLU_087195_3_0_5"/>
<dbReference type="OrthoDB" id="9816040at2"/>
<dbReference type="Proteomes" id="UP000008809">
    <property type="component" value="Chromosome"/>
</dbReference>
<dbReference type="GO" id="GO:0034432">
    <property type="term" value="F:bis(5'-adenosyl)-pentaphosphatase activity"/>
    <property type="evidence" value="ECO:0007669"/>
    <property type="project" value="TreeGrafter"/>
</dbReference>
<dbReference type="GO" id="GO:0008893">
    <property type="term" value="F:guanosine-3',5'-bis(diphosphate) 3'-diphosphatase activity"/>
    <property type="evidence" value="ECO:0007669"/>
    <property type="project" value="TreeGrafter"/>
</dbReference>
<dbReference type="GO" id="GO:0006753">
    <property type="term" value="P:nucleoside phosphate metabolic process"/>
    <property type="evidence" value="ECO:0007669"/>
    <property type="project" value="TreeGrafter"/>
</dbReference>
<dbReference type="GO" id="GO:0019693">
    <property type="term" value="P:ribose phosphate metabolic process"/>
    <property type="evidence" value="ECO:0007669"/>
    <property type="project" value="TreeGrafter"/>
</dbReference>
<dbReference type="CDD" id="cd03671">
    <property type="entry name" value="NUDIX_Ap4A_hydrolase_plant_like"/>
    <property type="match status" value="1"/>
</dbReference>
<dbReference type="Gene3D" id="3.90.79.10">
    <property type="entry name" value="Nucleoside Triphosphate Pyrophosphohydrolase"/>
    <property type="match status" value="1"/>
</dbReference>
<dbReference type="HAMAP" id="MF_00298">
    <property type="entry name" value="Nudix_RppH"/>
    <property type="match status" value="1"/>
</dbReference>
<dbReference type="InterPro" id="IPR015797">
    <property type="entry name" value="NUDIX_hydrolase-like_dom_sf"/>
</dbReference>
<dbReference type="InterPro" id="IPR020084">
    <property type="entry name" value="NUDIX_hydrolase_CS"/>
</dbReference>
<dbReference type="InterPro" id="IPR000086">
    <property type="entry name" value="NUDIX_hydrolase_dom"/>
</dbReference>
<dbReference type="InterPro" id="IPR022927">
    <property type="entry name" value="RppH"/>
</dbReference>
<dbReference type="NCBIfam" id="NF001938">
    <property type="entry name" value="PRK00714.1-5"/>
    <property type="match status" value="1"/>
</dbReference>
<dbReference type="PANTHER" id="PTHR11839:SF22">
    <property type="entry name" value="NUDIX HYDROLASE 26, CHLOROPLASTIC"/>
    <property type="match status" value="1"/>
</dbReference>
<dbReference type="PANTHER" id="PTHR11839">
    <property type="entry name" value="UDP/ADP-SUGAR PYROPHOSPHATASE"/>
    <property type="match status" value="1"/>
</dbReference>
<dbReference type="Pfam" id="PF00293">
    <property type="entry name" value="NUDIX"/>
    <property type="match status" value="1"/>
</dbReference>
<dbReference type="SUPFAM" id="SSF55811">
    <property type="entry name" value="Nudix"/>
    <property type="match status" value="1"/>
</dbReference>
<dbReference type="PROSITE" id="PS51462">
    <property type="entry name" value="NUDIX"/>
    <property type="match status" value="1"/>
</dbReference>
<dbReference type="PROSITE" id="PS00893">
    <property type="entry name" value="NUDIX_BOX"/>
    <property type="match status" value="1"/>
</dbReference>
<comment type="function">
    <text evidence="1">Accelerates the degradation of transcripts by removing pyrophosphate from the 5'-end of triphosphorylated RNA, leading to a more labile monophosphorylated state that can stimulate subsequent ribonuclease cleavage.</text>
</comment>
<comment type="cofactor">
    <cofactor evidence="1">
        <name>a divalent metal cation</name>
        <dbReference type="ChEBI" id="CHEBI:60240"/>
    </cofactor>
</comment>
<comment type="similarity">
    <text evidence="1">Belongs to the Nudix hydrolase family. RppH subfamily.</text>
</comment>
<organism>
    <name type="scientific">Rhodopseudomonas palustris (strain HaA2)</name>
    <dbReference type="NCBI Taxonomy" id="316058"/>
    <lineage>
        <taxon>Bacteria</taxon>
        <taxon>Pseudomonadati</taxon>
        <taxon>Pseudomonadota</taxon>
        <taxon>Alphaproteobacteria</taxon>
        <taxon>Hyphomicrobiales</taxon>
        <taxon>Nitrobacteraceae</taxon>
        <taxon>Rhodopseudomonas</taxon>
    </lineage>
</organism>
<feature type="chain" id="PRO_1000021980" description="RNA pyrophosphohydrolase">
    <location>
        <begin position="1"/>
        <end position="167"/>
    </location>
</feature>
<feature type="domain" description="Nudix hydrolase" evidence="1">
    <location>
        <begin position="8"/>
        <end position="158"/>
    </location>
</feature>
<feature type="short sequence motif" description="Nudix box">
    <location>
        <begin position="47"/>
        <end position="68"/>
    </location>
</feature>
<gene>
    <name evidence="1" type="primary">rppH</name>
    <name evidence="1" type="synonym">nudH</name>
    <name type="ordered locus">RPB_0260</name>
</gene>
<name>RPPH_RHOP2</name>
<keyword id="KW-0378">Hydrolase</keyword>
<keyword id="KW-1185">Reference proteome</keyword>